<reference key="1">
    <citation type="journal article" date="2009" name="PLoS Genet.">
        <title>Organised genome dynamics in the Escherichia coli species results in highly diverse adaptive paths.</title>
        <authorList>
            <person name="Touchon M."/>
            <person name="Hoede C."/>
            <person name="Tenaillon O."/>
            <person name="Barbe V."/>
            <person name="Baeriswyl S."/>
            <person name="Bidet P."/>
            <person name="Bingen E."/>
            <person name="Bonacorsi S."/>
            <person name="Bouchier C."/>
            <person name="Bouvet O."/>
            <person name="Calteau A."/>
            <person name="Chiapello H."/>
            <person name="Clermont O."/>
            <person name="Cruveiller S."/>
            <person name="Danchin A."/>
            <person name="Diard M."/>
            <person name="Dossat C."/>
            <person name="Karoui M.E."/>
            <person name="Frapy E."/>
            <person name="Garry L."/>
            <person name="Ghigo J.M."/>
            <person name="Gilles A.M."/>
            <person name="Johnson J."/>
            <person name="Le Bouguenec C."/>
            <person name="Lescat M."/>
            <person name="Mangenot S."/>
            <person name="Martinez-Jehanne V."/>
            <person name="Matic I."/>
            <person name="Nassif X."/>
            <person name="Oztas S."/>
            <person name="Petit M.A."/>
            <person name="Pichon C."/>
            <person name="Rouy Z."/>
            <person name="Ruf C.S."/>
            <person name="Schneider D."/>
            <person name="Tourret J."/>
            <person name="Vacherie B."/>
            <person name="Vallenet D."/>
            <person name="Medigue C."/>
            <person name="Rocha E.P.C."/>
            <person name="Denamur E."/>
        </authorList>
    </citation>
    <scope>NUCLEOTIDE SEQUENCE [LARGE SCALE GENOMIC DNA]</scope>
    <source>
        <strain>S88 / ExPEC</strain>
    </source>
</reference>
<sequence>MKSLQALFGGTFDPVHYGHLKPVETLANLIGLTRVTIIPNNVPPHRPQPEANSMQRKHMLELAIADKPLFTLDERELKRNAPSYTAQTLKEWRQEQGPDVPLAFIIGQDSLLTFPTWYEYETILDNAHLIVCRRPGYPLEMAQPQYQQWLEDHLTHNPEDLHLQPAGKIYLAETPWFNISATIIRERLQNGESCEDLLPEPVLTYINQQGLYR</sequence>
<name>NADD_ECO45</name>
<dbReference type="EC" id="2.7.7.18" evidence="1"/>
<dbReference type="EMBL" id="CU928161">
    <property type="protein sequence ID" value="CAR02021.1"/>
    <property type="molecule type" value="Genomic_DNA"/>
</dbReference>
<dbReference type="RefSeq" id="WP_000838881.1">
    <property type="nucleotide sequence ID" value="NC_011742.1"/>
</dbReference>
<dbReference type="SMR" id="B7MFR2"/>
<dbReference type="KEGG" id="ecz:ECS88_0681"/>
<dbReference type="HOGENOM" id="CLU_069765_0_0_6"/>
<dbReference type="UniPathway" id="UPA00253">
    <property type="reaction ID" value="UER00332"/>
</dbReference>
<dbReference type="Proteomes" id="UP000000747">
    <property type="component" value="Chromosome"/>
</dbReference>
<dbReference type="GO" id="GO:0005524">
    <property type="term" value="F:ATP binding"/>
    <property type="evidence" value="ECO:0007669"/>
    <property type="project" value="UniProtKB-KW"/>
</dbReference>
<dbReference type="GO" id="GO:0004515">
    <property type="term" value="F:nicotinate-nucleotide adenylyltransferase activity"/>
    <property type="evidence" value="ECO:0007669"/>
    <property type="project" value="UniProtKB-UniRule"/>
</dbReference>
<dbReference type="GO" id="GO:0009435">
    <property type="term" value="P:NAD biosynthetic process"/>
    <property type="evidence" value="ECO:0007669"/>
    <property type="project" value="UniProtKB-UniRule"/>
</dbReference>
<dbReference type="CDD" id="cd02165">
    <property type="entry name" value="NMNAT"/>
    <property type="match status" value="1"/>
</dbReference>
<dbReference type="FunFam" id="3.40.50.620:FF:000039">
    <property type="entry name" value="Probable nicotinate-nucleotide adenylyltransferase"/>
    <property type="match status" value="1"/>
</dbReference>
<dbReference type="Gene3D" id="3.40.50.620">
    <property type="entry name" value="HUPs"/>
    <property type="match status" value="1"/>
</dbReference>
<dbReference type="HAMAP" id="MF_00244">
    <property type="entry name" value="NaMN_adenylyltr"/>
    <property type="match status" value="1"/>
</dbReference>
<dbReference type="InterPro" id="IPR004821">
    <property type="entry name" value="Cyt_trans-like"/>
</dbReference>
<dbReference type="InterPro" id="IPR005248">
    <property type="entry name" value="NadD/NMNAT"/>
</dbReference>
<dbReference type="InterPro" id="IPR014729">
    <property type="entry name" value="Rossmann-like_a/b/a_fold"/>
</dbReference>
<dbReference type="NCBIfam" id="TIGR00125">
    <property type="entry name" value="cyt_tran_rel"/>
    <property type="match status" value="1"/>
</dbReference>
<dbReference type="NCBIfam" id="TIGR00482">
    <property type="entry name" value="nicotinate (nicotinamide) nucleotide adenylyltransferase"/>
    <property type="match status" value="1"/>
</dbReference>
<dbReference type="NCBIfam" id="NF000839">
    <property type="entry name" value="PRK00071.1-1"/>
    <property type="match status" value="1"/>
</dbReference>
<dbReference type="NCBIfam" id="NF000840">
    <property type="entry name" value="PRK00071.1-3"/>
    <property type="match status" value="1"/>
</dbReference>
<dbReference type="PANTHER" id="PTHR39321">
    <property type="entry name" value="NICOTINATE-NUCLEOTIDE ADENYLYLTRANSFERASE-RELATED"/>
    <property type="match status" value="1"/>
</dbReference>
<dbReference type="PANTHER" id="PTHR39321:SF3">
    <property type="entry name" value="PHOSPHOPANTETHEINE ADENYLYLTRANSFERASE"/>
    <property type="match status" value="1"/>
</dbReference>
<dbReference type="Pfam" id="PF01467">
    <property type="entry name" value="CTP_transf_like"/>
    <property type="match status" value="1"/>
</dbReference>
<dbReference type="SUPFAM" id="SSF52374">
    <property type="entry name" value="Nucleotidylyl transferase"/>
    <property type="match status" value="1"/>
</dbReference>
<feature type="chain" id="PRO_1000192235" description="Probable nicotinate-nucleotide adenylyltransferase">
    <location>
        <begin position="1"/>
        <end position="213"/>
    </location>
</feature>
<proteinExistence type="inferred from homology"/>
<gene>
    <name evidence="1" type="primary">nadD</name>
    <name type="ordered locus">ECS88_0681</name>
</gene>
<accession>B7MFR2</accession>
<protein>
    <recommendedName>
        <fullName evidence="1">Probable nicotinate-nucleotide adenylyltransferase</fullName>
        <ecNumber evidence="1">2.7.7.18</ecNumber>
    </recommendedName>
    <alternativeName>
        <fullName evidence="1">Deamido-NAD(+) diphosphorylase</fullName>
    </alternativeName>
    <alternativeName>
        <fullName evidence="1">Deamido-NAD(+) pyrophosphorylase</fullName>
    </alternativeName>
    <alternativeName>
        <fullName evidence="1">Nicotinate mononucleotide adenylyltransferase</fullName>
        <shortName evidence="1">NaMN adenylyltransferase</shortName>
    </alternativeName>
</protein>
<organism>
    <name type="scientific">Escherichia coli O45:K1 (strain S88 / ExPEC)</name>
    <dbReference type="NCBI Taxonomy" id="585035"/>
    <lineage>
        <taxon>Bacteria</taxon>
        <taxon>Pseudomonadati</taxon>
        <taxon>Pseudomonadota</taxon>
        <taxon>Gammaproteobacteria</taxon>
        <taxon>Enterobacterales</taxon>
        <taxon>Enterobacteriaceae</taxon>
        <taxon>Escherichia</taxon>
    </lineage>
</organism>
<comment type="function">
    <text evidence="1">Catalyzes the reversible adenylation of nicotinate mononucleotide (NaMN) to nicotinic acid adenine dinucleotide (NaAD).</text>
</comment>
<comment type="catalytic activity">
    <reaction evidence="1">
        <text>nicotinate beta-D-ribonucleotide + ATP + H(+) = deamido-NAD(+) + diphosphate</text>
        <dbReference type="Rhea" id="RHEA:22860"/>
        <dbReference type="ChEBI" id="CHEBI:15378"/>
        <dbReference type="ChEBI" id="CHEBI:30616"/>
        <dbReference type="ChEBI" id="CHEBI:33019"/>
        <dbReference type="ChEBI" id="CHEBI:57502"/>
        <dbReference type="ChEBI" id="CHEBI:58437"/>
        <dbReference type="EC" id="2.7.7.18"/>
    </reaction>
</comment>
<comment type="pathway">
    <text evidence="1">Cofactor biosynthesis; NAD(+) biosynthesis; deamido-NAD(+) from nicotinate D-ribonucleotide: step 1/1.</text>
</comment>
<comment type="similarity">
    <text evidence="1">Belongs to the NadD family.</text>
</comment>
<evidence type="ECO:0000255" key="1">
    <source>
        <dbReference type="HAMAP-Rule" id="MF_00244"/>
    </source>
</evidence>
<keyword id="KW-0067">ATP-binding</keyword>
<keyword id="KW-0520">NAD</keyword>
<keyword id="KW-0547">Nucleotide-binding</keyword>
<keyword id="KW-0548">Nucleotidyltransferase</keyword>
<keyword id="KW-0662">Pyridine nucleotide biosynthesis</keyword>
<keyword id="KW-1185">Reference proteome</keyword>
<keyword id="KW-0808">Transferase</keyword>